<accession>Q6K8R2</accession>
<accession>A0A0P0VLJ2</accession>
<reference key="1">
    <citation type="journal article" date="2005" name="Nature">
        <title>The map-based sequence of the rice genome.</title>
        <authorList>
            <consortium name="International rice genome sequencing project (IRGSP)"/>
        </authorList>
    </citation>
    <scope>NUCLEOTIDE SEQUENCE [LARGE SCALE GENOMIC DNA]</scope>
    <source>
        <strain>cv. Nipponbare</strain>
    </source>
</reference>
<reference key="2">
    <citation type="journal article" date="2008" name="Nucleic Acids Res.">
        <title>The rice annotation project database (RAP-DB): 2008 update.</title>
        <authorList>
            <consortium name="The rice annotation project (RAP)"/>
        </authorList>
    </citation>
    <scope>GENOME REANNOTATION</scope>
    <source>
        <strain>cv. Nipponbare</strain>
    </source>
</reference>
<reference key="3">
    <citation type="journal article" date="2013" name="Rice">
        <title>Improvement of the Oryza sativa Nipponbare reference genome using next generation sequence and optical map data.</title>
        <authorList>
            <person name="Kawahara Y."/>
            <person name="de la Bastide M."/>
            <person name="Hamilton J.P."/>
            <person name="Kanamori H."/>
            <person name="McCombie W.R."/>
            <person name="Ouyang S."/>
            <person name="Schwartz D.C."/>
            <person name="Tanaka T."/>
            <person name="Wu J."/>
            <person name="Zhou S."/>
            <person name="Childs K.L."/>
            <person name="Davidson R.M."/>
            <person name="Lin H."/>
            <person name="Quesada-Ocampo L."/>
            <person name="Vaillancourt B."/>
            <person name="Sakai H."/>
            <person name="Lee S.S."/>
            <person name="Kim J."/>
            <person name="Numa H."/>
            <person name="Itoh T."/>
            <person name="Buell C.R."/>
            <person name="Matsumoto T."/>
        </authorList>
    </citation>
    <scope>GENOME REANNOTATION</scope>
    <source>
        <strain>cv. Nipponbare</strain>
    </source>
</reference>
<reference key="4">
    <citation type="journal article" date="2005" name="PLoS Biol.">
        <title>The genomes of Oryza sativa: a history of duplications.</title>
        <authorList>
            <person name="Yu J."/>
            <person name="Wang J."/>
            <person name="Lin W."/>
            <person name="Li S."/>
            <person name="Li H."/>
            <person name="Zhou J."/>
            <person name="Ni P."/>
            <person name="Dong W."/>
            <person name="Hu S."/>
            <person name="Zeng C."/>
            <person name="Zhang J."/>
            <person name="Zhang Y."/>
            <person name="Li R."/>
            <person name="Xu Z."/>
            <person name="Li S."/>
            <person name="Li X."/>
            <person name="Zheng H."/>
            <person name="Cong L."/>
            <person name="Lin L."/>
            <person name="Yin J."/>
            <person name="Geng J."/>
            <person name="Li G."/>
            <person name="Shi J."/>
            <person name="Liu J."/>
            <person name="Lv H."/>
            <person name="Li J."/>
            <person name="Wang J."/>
            <person name="Deng Y."/>
            <person name="Ran L."/>
            <person name="Shi X."/>
            <person name="Wang X."/>
            <person name="Wu Q."/>
            <person name="Li C."/>
            <person name="Ren X."/>
            <person name="Wang J."/>
            <person name="Wang X."/>
            <person name="Li D."/>
            <person name="Liu D."/>
            <person name="Zhang X."/>
            <person name="Ji Z."/>
            <person name="Zhao W."/>
            <person name="Sun Y."/>
            <person name="Zhang Z."/>
            <person name="Bao J."/>
            <person name="Han Y."/>
            <person name="Dong L."/>
            <person name="Ji J."/>
            <person name="Chen P."/>
            <person name="Wu S."/>
            <person name="Liu J."/>
            <person name="Xiao Y."/>
            <person name="Bu D."/>
            <person name="Tan J."/>
            <person name="Yang L."/>
            <person name="Ye C."/>
            <person name="Zhang J."/>
            <person name="Xu J."/>
            <person name="Zhou Y."/>
            <person name="Yu Y."/>
            <person name="Zhang B."/>
            <person name="Zhuang S."/>
            <person name="Wei H."/>
            <person name="Liu B."/>
            <person name="Lei M."/>
            <person name="Yu H."/>
            <person name="Li Y."/>
            <person name="Xu H."/>
            <person name="Wei S."/>
            <person name="He X."/>
            <person name="Fang L."/>
            <person name="Zhang Z."/>
            <person name="Zhang Y."/>
            <person name="Huang X."/>
            <person name="Su Z."/>
            <person name="Tong W."/>
            <person name="Li J."/>
            <person name="Tong Z."/>
            <person name="Li S."/>
            <person name="Ye J."/>
            <person name="Wang L."/>
            <person name="Fang L."/>
            <person name="Lei T."/>
            <person name="Chen C.-S."/>
            <person name="Chen H.-C."/>
            <person name="Xu Z."/>
            <person name="Li H."/>
            <person name="Huang H."/>
            <person name="Zhang F."/>
            <person name="Xu H."/>
            <person name="Li N."/>
            <person name="Zhao C."/>
            <person name="Li S."/>
            <person name="Dong L."/>
            <person name="Huang Y."/>
            <person name="Li L."/>
            <person name="Xi Y."/>
            <person name="Qi Q."/>
            <person name="Li W."/>
            <person name="Zhang B."/>
            <person name="Hu W."/>
            <person name="Zhang Y."/>
            <person name="Tian X."/>
            <person name="Jiao Y."/>
            <person name="Liang X."/>
            <person name="Jin J."/>
            <person name="Gao L."/>
            <person name="Zheng W."/>
            <person name="Hao B."/>
            <person name="Liu S.-M."/>
            <person name="Wang W."/>
            <person name="Yuan L."/>
            <person name="Cao M."/>
            <person name="McDermott J."/>
            <person name="Samudrala R."/>
            <person name="Wang J."/>
            <person name="Wong G.K.-S."/>
            <person name="Yang H."/>
        </authorList>
    </citation>
    <scope>NUCLEOTIDE SEQUENCE [LARGE SCALE GENOMIC DNA]</scope>
    <source>
        <strain>cv. Nipponbare</strain>
    </source>
</reference>
<reference key="5">
    <citation type="journal article" date="2003" name="Science">
        <title>Collection, mapping, and annotation of over 28,000 cDNA clones from japonica rice.</title>
        <authorList>
            <consortium name="The rice full-length cDNA consortium"/>
        </authorList>
    </citation>
    <scope>NUCLEOTIDE SEQUENCE [LARGE SCALE MRNA]</scope>
    <source>
        <strain>cv. Nipponbare</strain>
    </source>
</reference>
<reference key="6">
    <citation type="journal article" date="2006" name="Genome">
        <title>Distribution, structure, organ-specific expression, and phylogenic analysis of the pathogenesis-related protein-3 chitinase gene family in rice (Oryza sativa L.).</title>
        <authorList>
            <person name="Nakazaki T."/>
            <person name="Tsukiyama T."/>
            <person name="Okumoto Y."/>
            <person name="Kageyama D."/>
            <person name="Naito K."/>
            <person name="Inouye K."/>
            <person name="Tanisaka T."/>
        </authorList>
    </citation>
    <scope>GENE FAMILY</scope>
    <scope>NOMENCLATURE</scope>
    <scope>TISSUE SPECIFICITY</scope>
</reference>
<evidence type="ECO:0000250" key="1">
    <source>
        <dbReference type="UniProtKB" id="P29022"/>
    </source>
</evidence>
<evidence type="ECO:0000255" key="2"/>
<evidence type="ECO:0000255" key="3">
    <source>
        <dbReference type="PROSITE-ProRule" id="PRU00261"/>
    </source>
</evidence>
<evidence type="ECO:0000269" key="4">
    <source>
    </source>
</evidence>
<evidence type="ECO:0000305" key="5"/>
<organism>
    <name type="scientific">Oryza sativa subsp. japonica</name>
    <name type="common">Rice</name>
    <dbReference type="NCBI Taxonomy" id="39947"/>
    <lineage>
        <taxon>Eukaryota</taxon>
        <taxon>Viridiplantae</taxon>
        <taxon>Streptophyta</taxon>
        <taxon>Embryophyta</taxon>
        <taxon>Tracheophyta</taxon>
        <taxon>Spermatophyta</taxon>
        <taxon>Magnoliopsida</taxon>
        <taxon>Liliopsida</taxon>
        <taxon>Poales</taxon>
        <taxon>Poaceae</taxon>
        <taxon>BOP clade</taxon>
        <taxon>Oryzoideae</taxon>
        <taxon>Oryzeae</taxon>
        <taxon>Oryzinae</taxon>
        <taxon>Oryza</taxon>
        <taxon>Oryza sativa</taxon>
    </lineage>
</organism>
<sequence>MARRLSLLAVVLAMVAAVSASTAAAQSCGCASDQCCSKWGFCGTGSDYCGTGCQAGPCDVPATNDVSVASIVTPEFFAALVAQADDGCAAKGFYTRDAFLTAAGGYPSFGRTGSVDDSKREIAAFFAHANHETIKFCYIEEIDGPSKNYCDETSTQWPCMAGKGYYGRGPLQISWNFNYGPAGQSIGFDGLGDPDAVARSPVLAFQTALWYWTNNVHDAFVSGQGFGATIRAINGALECDGKNPTAVSNRVAYYQQFCQQFGVDPGSNLTC</sequence>
<proteinExistence type="evidence at transcript level"/>
<keyword id="KW-0119">Carbohydrate metabolism</keyword>
<keyword id="KW-0146">Chitin degradation</keyword>
<keyword id="KW-0147">Chitin-binding</keyword>
<keyword id="KW-1015">Disulfide bond</keyword>
<keyword id="KW-0325">Glycoprotein</keyword>
<keyword id="KW-0326">Glycosidase</keyword>
<keyword id="KW-0378">Hydrolase</keyword>
<keyword id="KW-0611">Plant defense</keyword>
<keyword id="KW-0624">Polysaccharide degradation</keyword>
<keyword id="KW-1185">Reference proteome</keyword>
<keyword id="KW-0732">Signal</keyword>
<name>CHI6_ORYSJ</name>
<protein>
    <recommendedName>
        <fullName>Chitinase 6</fullName>
        <ecNumber>3.2.1.14</ecNumber>
    </recommendedName>
    <alternativeName>
        <fullName>Pathogenesis related (PR)-3 chitinase 6</fullName>
    </alternativeName>
</protein>
<comment type="function">
    <text>May function in reproductive organs during embryogenesis and seed maturation.</text>
</comment>
<comment type="catalytic activity">
    <reaction>
        <text>Random endo-hydrolysis of N-acetyl-beta-D-glucosaminide (1-&gt;4)-beta-linkages in chitin and chitodextrins.</text>
        <dbReference type="EC" id="3.2.1.14"/>
    </reaction>
</comment>
<comment type="tissue specificity">
    <text evidence="4">Expressed in roots, leaves, sheaths and meristems.</text>
</comment>
<comment type="similarity">
    <text evidence="5">Belongs to the glycosyl hydrolase 19 family. Chitinase class IV subfamily.</text>
</comment>
<gene>
    <name type="primary">Cht6</name>
    <name type="ordered locus">Os02g0605900</name>
    <name type="ordered locus">LOC_Os02g39330</name>
    <name type="ORF">OJ1058_F07.19</name>
    <name type="ORF">OsJ_07447</name>
</gene>
<dbReference type="EC" id="3.2.1.14"/>
<dbReference type="EMBL" id="AP004111">
    <property type="protein sequence ID" value="BAD19330.1"/>
    <property type="molecule type" value="Genomic_DNA"/>
</dbReference>
<dbReference type="EMBL" id="AP008208">
    <property type="protein sequence ID" value="BAF09287.1"/>
    <property type="molecule type" value="Genomic_DNA"/>
</dbReference>
<dbReference type="EMBL" id="AP014958">
    <property type="protein sequence ID" value="BAS79659.1"/>
    <property type="molecule type" value="Genomic_DNA"/>
</dbReference>
<dbReference type="EMBL" id="CM000139">
    <property type="protein sequence ID" value="EAZ23743.1"/>
    <property type="molecule type" value="Genomic_DNA"/>
</dbReference>
<dbReference type="EMBL" id="AK064754">
    <property type="status" value="NOT_ANNOTATED_CDS"/>
    <property type="molecule type" value="mRNA"/>
</dbReference>
<dbReference type="RefSeq" id="XP_015623420.1">
    <property type="nucleotide sequence ID" value="XM_015767934.1"/>
</dbReference>
<dbReference type="SMR" id="Q6K8R2"/>
<dbReference type="FunCoup" id="Q6K8R2">
    <property type="interactions" value="133"/>
</dbReference>
<dbReference type="STRING" id="39947.Q6K8R2"/>
<dbReference type="CAZy" id="CBM18">
    <property type="family name" value="Carbohydrate-Binding Module Family 18"/>
</dbReference>
<dbReference type="CAZy" id="GH19">
    <property type="family name" value="Glycoside Hydrolase Family 19"/>
</dbReference>
<dbReference type="GlyCosmos" id="Q6K8R2">
    <property type="glycosylation" value="1 site, No reported glycans"/>
</dbReference>
<dbReference type="PaxDb" id="39947-Q6K8R2"/>
<dbReference type="EnsemblPlants" id="Os02t0605900-01">
    <property type="protein sequence ID" value="Os02t0605900-01"/>
    <property type="gene ID" value="Os02g0605900"/>
</dbReference>
<dbReference type="Gramene" id="Os02t0605900-01">
    <property type="protein sequence ID" value="Os02t0605900-01"/>
    <property type="gene ID" value="Os02g0605900"/>
</dbReference>
<dbReference type="KEGG" id="dosa:Os02g0605900"/>
<dbReference type="eggNOG" id="KOG4742">
    <property type="taxonomic scope" value="Eukaryota"/>
</dbReference>
<dbReference type="HOGENOM" id="CLU_045506_1_1_1"/>
<dbReference type="InParanoid" id="Q6K8R2"/>
<dbReference type="OMA" id="KDYCDEE"/>
<dbReference type="OrthoDB" id="5985073at2759"/>
<dbReference type="Proteomes" id="UP000000763">
    <property type="component" value="Chromosome 2"/>
</dbReference>
<dbReference type="Proteomes" id="UP000007752">
    <property type="component" value="Chromosome 2"/>
</dbReference>
<dbReference type="Proteomes" id="UP000059680">
    <property type="component" value="Chromosome 2"/>
</dbReference>
<dbReference type="GO" id="GO:0008061">
    <property type="term" value="F:chitin binding"/>
    <property type="evidence" value="ECO:0007669"/>
    <property type="project" value="UniProtKB-KW"/>
</dbReference>
<dbReference type="GO" id="GO:0004568">
    <property type="term" value="F:chitinase activity"/>
    <property type="evidence" value="ECO:0000318"/>
    <property type="project" value="GO_Central"/>
</dbReference>
<dbReference type="GO" id="GO:0008843">
    <property type="term" value="F:endochitinase activity"/>
    <property type="evidence" value="ECO:0007669"/>
    <property type="project" value="UniProtKB-EC"/>
</dbReference>
<dbReference type="GO" id="GO:0016998">
    <property type="term" value="P:cell wall macromolecule catabolic process"/>
    <property type="evidence" value="ECO:0007669"/>
    <property type="project" value="InterPro"/>
</dbReference>
<dbReference type="GO" id="GO:0006032">
    <property type="term" value="P:chitin catabolic process"/>
    <property type="evidence" value="ECO:0007669"/>
    <property type="project" value="UniProtKB-KW"/>
</dbReference>
<dbReference type="GO" id="GO:0006952">
    <property type="term" value="P:defense response"/>
    <property type="evidence" value="ECO:0007669"/>
    <property type="project" value="UniProtKB-KW"/>
</dbReference>
<dbReference type="GO" id="GO:0000272">
    <property type="term" value="P:polysaccharide catabolic process"/>
    <property type="evidence" value="ECO:0007669"/>
    <property type="project" value="UniProtKB-KW"/>
</dbReference>
<dbReference type="CDD" id="cd00325">
    <property type="entry name" value="chitinase_GH19"/>
    <property type="match status" value="1"/>
</dbReference>
<dbReference type="CDD" id="cd00035">
    <property type="entry name" value="ChtBD1"/>
    <property type="match status" value="1"/>
</dbReference>
<dbReference type="FunFam" id="3.30.60.10:FF:000003">
    <property type="entry name" value="Class IV chitinase"/>
    <property type="match status" value="1"/>
</dbReference>
<dbReference type="FunFam" id="3.30.20.10:FF:000001">
    <property type="entry name" value="Endochitinase (Chitinase)"/>
    <property type="match status" value="1"/>
</dbReference>
<dbReference type="FunFam" id="1.10.530.10:FF:000052">
    <property type="entry name" value="Endochitinase PR4"/>
    <property type="match status" value="1"/>
</dbReference>
<dbReference type="Gene3D" id="1.10.530.10">
    <property type="match status" value="1"/>
</dbReference>
<dbReference type="Gene3D" id="3.30.20.10">
    <property type="entry name" value="Endochitinase, domain 2"/>
    <property type="match status" value="1"/>
</dbReference>
<dbReference type="Gene3D" id="3.30.60.10">
    <property type="entry name" value="Endochitinase-like"/>
    <property type="match status" value="1"/>
</dbReference>
<dbReference type="InterPro" id="IPR001002">
    <property type="entry name" value="Chitin-bd_1"/>
</dbReference>
<dbReference type="InterPro" id="IPR018371">
    <property type="entry name" value="Chitin-binding_1_CS"/>
</dbReference>
<dbReference type="InterPro" id="IPR036861">
    <property type="entry name" value="Endochitinase-like_sf"/>
</dbReference>
<dbReference type="InterPro" id="IPR016283">
    <property type="entry name" value="Glyco_hydro_19"/>
</dbReference>
<dbReference type="InterPro" id="IPR000726">
    <property type="entry name" value="Glyco_hydro_19_cat"/>
</dbReference>
<dbReference type="InterPro" id="IPR023346">
    <property type="entry name" value="Lysozyme-like_dom_sf"/>
</dbReference>
<dbReference type="PANTHER" id="PTHR22595">
    <property type="entry name" value="CHITINASE-RELATED"/>
    <property type="match status" value="1"/>
</dbReference>
<dbReference type="PANTHER" id="PTHR22595:SF193">
    <property type="entry name" value="ENDOCHITINASE EP3"/>
    <property type="match status" value="1"/>
</dbReference>
<dbReference type="Pfam" id="PF00187">
    <property type="entry name" value="Chitin_bind_1"/>
    <property type="match status" value="1"/>
</dbReference>
<dbReference type="Pfam" id="PF00182">
    <property type="entry name" value="Glyco_hydro_19"/>
    <property type="match status" value="2"/>
</dbReference>
<dbReference type="PIRSF" id="PIRSF001060">
    <property type="entry name" value="Endochitinase"/>
    <property type="match status" value="1"/>
</dbReference>
<dbReference type="SMART" id="SM00270">
    <property type="entry name" value="ChtBD1"/>
    <property type="match status" value="1"/>
</dbReference>
<dbReference type="SUPFAM" id="SSF53955">
    <property type="entry name" value="Lysozyme-like"/>
    <property type="match status" value="1"/>
</dbReference>
<dbReference type="SUPFAM" id="SSF57016">
    <property type="entry name" value="Plant lectins/antimicrobial peptides"/>
    <property type="match status" value="1"/>
</dbReference>
<dbReference type="PROSITE" id="PS00026">
    <property type="entry name" value="CHIT_BIND_I_1"/>
    <property type="match status" value="1"/>
</dbReference>
<dbReference type="PROSITE" id="PS50941">
    <property type="entry name" value="CHIT_BIND_I_2"/>
    <property type="match status" value="1"/>
</dbReference>
<dbReference type="PROSITE" id="PS00773">
    <property type="entry name" value="CHITINASE_19_1"/>
    <property type="match status" value="1"/>
</dbReference>
<feature type="signal peptide" evidence="2">
    <location>
        <begin position="1"/>
        <end position="20"/>
    </location>
</feature>
<feature type="chain" id="PRO_0000383465" description="Chitinase 6">
    <location>
        <begin position="21"/>
        <end position="271"/>
    </location>
</feature>
<feature type="domain" description="Chitin-binding type-1" evidence="3">
    <location>
        <begin position="25"/>
        <end position="60"/>
    </location>
</feature>
<feature type="active site" description="Proton donor" evidence="1">
    <location>
        <position position="132"/>
    </location>
</feature>
<feature type="glycosylation site" description="N-linked (GlcNAc...) asparagine" evidence="2">
    <location>
        <position position="268"/>
    </location>
</feature>
<feature type="disulfide bond" evidence="3">
    <location>
        <begin position="28"/>
        <end position="36"/>
    </location>
</feature>
<feature type="disulfide bond" evidence="3">
    <location>
        <begin position="30"/>
        <end position="42"/>
    </location>
</feature>
<feature type="disulfide bond" evidence="3">
    <location>
        <begin position="35"/>
        <end position="49"/>
    </location>
</feature>
<feature type="disulfide bond" evidence="3">
    <location>
        <begin position="88"/>
        <end position="137"/>
    </location>
</feature>
<feature type="disulfide bond" evidence="3">
    <location>
        <begin position="150"/>
        <end position="159"/>
    </location>
</feature>
<feature type="disulfide bond" evidence="3">
    <location>
        <begin position="239"/>
        <end position="271"/>
    </location>
</feature>
<feature type="sequence conflict" description="In Ref. 5; AK064754." evidence="5" ref="5">
    <original>S</original>
    <variation>L</variation>
    <location>
        <position position="6"/>
    </location>
</feature>
<feature type="sequence conflict" description="In Ref. 5; AK064754." evidence="5" ref="5">
    <original>Y</original>
    <variation>H</variation>
    <location>
        <position position="149"/>
    </location>
</feature>